<proteinExistence type="inferred from homology"/>
<evidence type="ECO:0000250" key="1"/>
<evidence type="ECO:0000305" key="2"/>
<sequence>MNEETGIPDDNLLTIEQAIANLQSEDLGLRVYAAWWLGRFRVNVPEAIDLLIAALADEADRTEAGGYPLRRNAARALGKLGDRRAVPALITSLECDDFYVREAVAQSLEMLGDNSCVPYLIELIKNPNPEASADTEPEHPYDAFLEALGTLGAVKAIPHILPFLDHPIPKVQYAAARAMYQLSEPMVADQYGDRLVAALANDDLQLRRTVLSDLGAIGYLSAAEAIGNTMAENSLKLISLKGLLEKQIVLATPPDLTDGAIRVMALMDDLL</sequence>
<protein>
    <recommendedName>
        <fullName>Phycocyanobilin lyase subunit alpha</fullName>
        <ecNumber>4.-.-.-</ecNumber>
    </recommendedName>
    <alternativeName>
        <fullName>Phycocyanin-1 operon protein CpcE</fullName>
    </alternativeName>
</protein>
<gene>
    <name type="primary">cpcE1</name>
</gene>
<reference key="1">
    <citation type="submission" date="1992-08" db="EMBL/GenBank/DDBJ databases">
        <title>Organization and transcription of the genes encoding two differentially expressed phycocyanins in the cyanobacterium Pseudanabaena sp. PCC 7409.</title>
        <authorList>
            <person name="Dubbs J.M."/>
            <person name="Bryant D.A."/>
        </authorList>
    </citation>
    <scope>NUCLEOTIDE SEQUENCE [GENOMIC DNA]</scope>
</reference>
<accession>Q52448</accession>
<organism>
    <name type="scientific">Pseudanabaena tenuis (strain PCC 7409)</name>
    <dbReference type="NCBI Taxonomy" id="29415"/>
    <lineage>
        <taxon>Bacteria</taxon>
        <taxon>Bacillati</taxon>
        <taxon>Cyanobacteriota</taxon>
        <taxon>Cyanophyceae</taxon>
        <taxon>Pseudanabaenales</taxon>
        <taxon>Pseudanabaenaceae</taxon>
        <taxon>Pseudanabaena</taxon>
    </lineage>
</organism>
<comment type="function">
    <text evidence="1">Required for the chromophorylation of the cpcA1 gene product.</text>
</comment>
<comment type="subunit">
    <text evidence="1">CpcE and CpcF associate to form a lyase.</text>
</comment>
<comment type="similarity">
    <text evidence="2">Belongs to the CpcE/RpcE/PecE family.</text>
</comment>
<name>CPCE_PSETP</name>
<dbReference type="EC" id="4.-.-.-"/>
<dbReference type="EMBL" id="M99426">
    <property type="protein sequence ID" value="AAA26040.1"/>
    <property type="molecule type" value="Genomic_DNA"/>
</dbReference>
<dbReference type="SMR" id="Q52448"/>
<dbReference type="GO" id="GO:0030089">
    <property type="term" value="C:phycobilisome"/>
    <property type="evidence" value="ECO:0007669"/>
    <property type="project" value="UniProtKB-KW"/>
</dbReference>
<dbReference type="GO" id="GO:0016829">
    <property type="term" value="F:lyase activity"/>
    <property type="evidence" value="ECO:0007669"/>
    <property type="project" value="UniProtKB-KW"/>
</dbReference>
<dbReference type="GO" id="GO:0016491">
    <property type="term" value="F:oxidoreductase activity"/>
    <property type="evidence" value="ECO:0007669"/>
    <property type="project" value="TreeGrafter"/>
</dbReference>
<dbReference type="Gene3D" id="1.25.10.10">
    <property type="entry name" value="Leucine-rich Repeat Variant"/>
    <property type="match status" value="2"/>
</dbReference>
<dbReference type="InterPro" id="IPR011989">
    <property type="entry name" value="ARM-like"/>
</dbReference>
<dbReference type="InterPro" id="IPR016024">
    <property type="entry name" value="ARM-type_fold"/>
</dbReference>
<dbReference type="InterPro" id="IPR004155">
    <property type="entry name" value="PBS_lyase_HEAT"/>
</dbReference>
<dbReference type="PANTHER" id="PTHR12697:SF5">
    <property type="entry name" value="DEOXYHYPUSINE HYDROXYLASE"/>
    <property type="match status" value="1"/>
</dbReference>
<dbReference type="PANTHER" id="PTHR12697">
    <property type="entry name" value="PBS LYASE HEAT-LIKE PROTEIN"/>
    <property type="match status" value="1"/>
</dbReference>
<dbReference type="Pfam" id="PF13646">
    <property type="entry name" value="HEAT_2"/>
    <property type="match status" value="1"/>
</dbReference>
<dbReference type="Pfam" id="PF03130">
    <property type="entry name" value="HEAT_PBS"/>
    <property type="match status" value="1"/>
</dbReference>
<dbReference type="SMART" id="SM00567">
    <property type="entry name" value="EZ_HEAT"/>
    <property type="match status" value="6"/>
</dbReference>
<dbReference type="SUPFAM" id="SSF48371">
    <property type="entry name" value="ARM repeat"/>
    <property type="match status" value="1"/>
</dbReference>
<keyword id="KW-0042">Antenna complex</keyword>
<keyword id="KW-0456">Lyase</keyword>
<keyword id="KW-0605">Phycobilisome</keyword>
<feature type="chain" id="PRO_0000199268" description="Phycocyanobilin lyase subunit alpha">
    <location>
        <begin position="1"/>
        <end position="271"/>
    </location>
</feature>